<name>CMA1_MOUSE</name>
<feature type="signal peptide" evidence="2">
    <location>
        <begin position="1"/>
        <end position="19"/>
    </location>
</feature>
<feature type="propeptide" id="PRO_0000027455" description="Activation peptide" evidence="5">
    <location>
        <begin position="20"/>
        <end position="21"/>
    </location>
</feature>
<feature type="chain" id="PRO_0000027456" description="Chymase">
    <location>
        <begin position="22"/>
        <end position="247"/>
    </location>
</feature>
<feature type="domain" description="Peptidase S1" evidence="3">
    <location>
        <begin position="22"/>
        <end position="245"/>
    </location>
</feature>
<feature type="active site" description="Charge relay system" evidence="1">
    <location>
        <position position="66"/>
    </location>
</feature>
<feature type="active site" description="Charge relay system" evidence="1">
    <location>
        <position position="110"/>
    </location>
</feature>
<feature type="active site" description="Charge relay system" evidence="1">
    <location>
        <position position="203"/>
    </location>
</feature>
<feature type="glycosylation site" description="N-linked (GlcNAc...) asparagine" evidence="2">
    <location>
        <position position="80"/>
    </location>
</feature>
<feature type="disulfide bond" evidence="3">
    <location>
        <begin position="51"/>
        <end position="67"/>
    </location>
</feature>
<feature type="disulfide bond" evidence="3">
    <location>
        <begin position="144"/>
        <end position="209"/>
    </location>
</feature>
<feature type="disulfide bond" evidence="3">
    <location>
        <begin position="175"/>
        <end position="188"/>
    </location>
</feature>
<feature type="sequence conflict" description="In Ref. 1; AAA40105." evidence="6" ref="1">
    <original>T</original>
    <variation>A</variation>
    <location>
        <position position="5"/>
    </location>
</feature>
<feature type="sequence conflict" description="In Ref. 5; AA sequence." evidence="6" ref="5">
    <original>C</original>
    <variation>R</variation>
    <location>
        <position position="51"/>
    </location>
</feature>
<feature type="sequence conflict" description="In Ref. 3; AAA39492." evidence="6" ref="3">
    <original>A</original>
    <variation>R</variation>
    <location>
        <position position="224"/>
    </location>
</feature>
<organism>
    <name type="scientific">Mus musculus</name>
    <name type="common">Mouse</name>
    <dbReference type="NCBI Taxonomy" id="10090"/>
    <lineage>
        <taxon>Eukaryota</taxon>
        <taxon>Metazoa</taxon>
        <taxon>Chordata</taxon>
        <taxon>Craniata</taxon>
        <taxon>Vertebrata</taxon>
        <taxon>Euteleostomi</taxon>
        <taxon>Mammalia</taxon>
        <taxon>Eutheria</taxon>
        <taxon>Euarchontoglires</taxon>
        <taxon>Glires</taxon>
        <taxon>Rodentia</taxon>
        <taxon>Myomorpha</taxon>
        <taxon>Muroidea</taxon>
        <taxon>Muridae</taxon>
        <taxon>Murinae</taxon>
        <taxon>Mus</taxon>
        <taxon>Mus</taxon>
    </lineage>
</organism>
<dbReference type="EC" id="3.4.21.39"/>
<dbReference type="EMBL" id="M73759">
    <property type="protein sequence ID" value="AAA40105.1"/>
    <property type="molecule type" value="mRNA"/>
</dbReference>
<dbReference type="EMBL" id="M73760">
    <property type="status" value="NOT_ANNOTATED_CDS"/>
    <property type="molecule type" value="mRNA"/>
</dbReference>
<dbReference type="EMBL" id="X68805">
    <property type="protein sequence ID" value="CAA48705.1"/>
    <property type="status" value="ALT_INIT"/>
    <property type="molecule type" value="mRNA"/>
</dbReference>
<dbReference type="EMBL" id="M68898">
    <property type="protein sequence ID" value="AAA39492.1"/>
    <property type="molecule type" value="mRNA"/>
</dbReference>
<dbReference type="EMBL" id="AF119364">
    <property type="protein sequence ID" value="AAD43901.1"/>
    <property type="molecule type" value="Genomic_DNA"/>
</dbReference>
<dbReference type="CCDS" id="CCDS27135.2"/>
<dbReference type="PIR" id="S23504">
    <property type="entry name" value="S23504"/>
</dbReference>
<dbReference type="PIR" id="S26043">
    <property type="entry name" value="S26043"/>
</dbReference>
<dbReference type="RefSeq" id="NP_034910.2">
    <property type="nucleotide sequence ID" value="NM_010780.3"/>
</dbReference>
<dbReference type="SMR" id="P21844"/>
<dbReference type="FunCoup" id="P21844">
    <property type="interactions" value="299"/>
</dbReference>
<dbReference type="STRING" id="10090.ENSMUSP00000022834"/>
<dbReference type="MEROPS" id="S01.150"/>
<dbReference type="GlyCosmos" id="P21844">
    <property type="glycosylation" value="1 site, No reported glycans"/>
</dbReference>
<dbReference type="GlyGen" id="P21844">
    <property type="glycosylation" value="1 site, 1 N-linked glycan (1 site)"/>
</dbReference>
<dbReference type="iPTMnet" id="P21844"/>
<dbReference type="PhosphoSitePlus" id="P21844"/>
<dbReference type="PaxDb" id="10090-ENSMUSP00000022834"/>
<dbReference type="ProteomicsDB" id="285499"/>
<dbReference type="Antibodypedia" id="3125">
    <property type="antibodies" value="382 antibodies from 38 providers"/>
</dbReference>
<dbReference type="DNASU" id="17228"/>
<dbReference type="Ensembl" id="ENSMUST00000226280.2">
    <property type="protein sequence ID" value="ENSMUSP00000154406.2"/>
    <property type="gene ID" value="ENSMUSG00000022225.8"/>
</dbReference>
<dbReference type="GeneID" id="17228"/>
<dbReference type="KEGG" id="mmu:17228"/>
<dbReference type="AGR" id="MGI:96941"/>
<dbReference type="CTD" id="1215"/>
<dbReference type="MGI" id="MGI:96941">
    <property type="gene designation" value="Cma1"/>
</dbReference>
<dbReference type="VEuPathDB" id="HostDB:ENSMUSG00000022225"/>
<dbReference type="eggNOG" id="KOG3627">
    <property type="taxonomic scope" value="Eukaryota"/>
</dbReference>
<dbReference type="GeneTree" id="ENSGT01030000234551"/>
<dbReference type="InParanoid" id="P21844"/>
<dbReference type="OMA" id="CAGRFIM"/>
<dbReference type="OrthoDB" id="5565075at2759"/>
<dbReference type="BRENDA" id="3.4.21.B5">
    <property type="organism ID" value="3474"/>
</dbReference>
<dbReference type="Reactome" id="R-MMU-1433557">
    <property type="pathway name" value="Signaling by SCF-KIT"/>
</dbReference>
<dbReference type="Reactome" id="R-MMU-1592389">
    <property type="pathway name" value="Activation of Matrix Metalloproteinases"/>
</dbReference>
<dbReference type="Reactome" id="R-MMU-2022377">
    <property type="pathway name" value="Metabolism of Angiotensinogen to Angiotensins"/>
</dbReference>
<dbReference type="BioGRID-ORCS" id="17228">
    <property type="hits" value="0 hits in 77 CRISPR screens"/>
</dbReference>
<dbReference type="PRO" id="PR:P21844"/>
<dbReference type="Proteomes" id="UP000000589">
    <property type="component" value="Chromosome 14"/>
</dbReference>
<dbReference type="RNAct" id="P21844">
    <property type="molecule type" value="protein"/>
</dbReference>
<dbReference type="Bgee" id="ENSMUSG00000022225">
    <property type="expression patterns" value="Expressed in dermis and 122 other cell types or tissues"/>
</dbReference>
<dbReference type="ExpressionAtlas" id="P21844">
    <property type="expression patterns" value="baseline and differential"/>
</dbReference>
<dbReference type="GO" id="GO:0005576">
    <property type="term" value="C:extracellular region"/>
    <property type="evidence" value="ECO:0007669"/>
    <property type="project" value="UniProtKB-SubCell"/>
</dbReference>
<dbReference type="GO" id="GO:0030141">
    <property type="term" value="C:secretory granule"/>
    <property type="evidence" value="ECO:0000266"/>
    <property type="project" value="MGI"/>
</dbReference>
<dbReference type="GO" id="GO:0004252">
    <property type="term" value="F:serine-type endopeptidase activity"/>
    <property type="evidence" value="ECO:0007669"/>
    <property type="project" value="UniProtKB-EC"/>
</dbReference>
<dbReference type="GO" id="GO:0006508">
    <property type="term" value="P:proteolysis"/>
    <property type="evidence" value="ECO:0007669"/>
    <property type="project" value="UniProtKB-KW"/>
</dbReference>
<dbReference type="CDD" id="cd00190">
    <property type="entry name" value="Tryp_SPc"/>
    <property type="match status" value="1"/>
</dbReference>
<dbReference type="FunFam" id="2.40.10.10:FF:000014">
    <property type="entry name" value="Complement factor D"/>
    <property type="match status" value="1"/>
</dbReference>
<dbReference type="FunFam" id="2.40.10.10:FF:000005">
    <property type="entry name" value="Serine protease 37"/>
    <property type="match status" value="1"/>
</dbReference>
<dbReference type="Gene3D" id="2.40.10.10">
    <property type="entry name" value="Trypsin-like serine proteases"/>
    <property type="match status" value="2"/>
</dbReference>
<dbReference type="InterPro" id="IPR009003">
    <property type="entry name" value="Peptidase_S1_PA"/>
</dbReference>
<dbReference type="InterPro" id="IPR043504">
    <property type="entry name" value="Peptidase_S1_PA_chymotrypsin"/>
</dbReference>
<dbReference type="InterPro" id="IPR001314">
    <property type="entry name" value="Peptidase_S1A"/>
</dbReference>
<dbReference type="InterPro" id="IPR001254">
    <property type="entry name" value="Trypsin_dom"/>
</dbReference>
<dbReference type="InterPro" id="IPR018114">
    <property type="entry name" value="TRYPSIN_HIS"/>
</dbReference>
<dbReference type="InterPro" id="IPR033116">
    <property type="entry name" value="TRYPSIN_SER"/>
</dbReference>
<dbReference type="PANTHER" id="PTHR24271:SF24">
    <property type="entry name" value="CHYMASE"/>
    <property type="match status" value="1"/>
</dbReference>
<dbReference type="PANTHER" id="PTHR24271">
    <property type="entry name" value="KALLIKREIN-RELATED"/>
    <property type="match status" value="1"/>
</dbReference>
<dbReference type="Pfam" id="PF00089">
    <property type="entry name" value="Trypsin"/>
    <property type="match status" value="1"/>
</dbReference>
<dbReference type="PRINTS" id="PR00722">
    <property type="entry name" value="CHYMOTRYPSIN"/>
</dbReference>
<dbReference type="SMART" id="SM00020">
    <property type="entry name" value="Tryp_SPc"/>
    <property type="match status" value="1"/>
</dbReference>
<dbReference type="SUPFAM" id="SSF50494">
    <property type="entry name" value="Trypsin-like serine proteases"/>
    <property type="match status" value="1"/>
</dbReference>
<dbReference type="PROSITE" id="PS50240">
    <property type="entry name" value="TRYPSIN_DOM"/>
    <property type="match status" value="1"/>
</dbReference>
<dbReference type="PROSITE" id="PS00134">
    <property type="entry name" value="TRYPSIN_HIS"/>
    <property type="match status" value="1"/>
</dbReference>
<dbReference type="PROSITE" id="PS00135">
    <property type="entry name" value="TRYPSIN_SER"/>
    <property type="match status" value="1"/>
</dbReference>
<evidence type="ECO:0000250" key="1"/>
<evidence type="ECO:0000255" key="2"/>
<evidence type="ECO:0000255" key="3">
    <source>
        <dbReference type="PROSITE-ProRule" id="PRU00274"/>
    </source>
</evidence>
<evidence type="ECO:0000269" key="4">
    <source>
    </source>
</evidence>
<evidence type="ECO:0000269" key="5">
    <source>
    </source>
</evidence>
<evidence type="ECO:0000305" key="6"/>
<protein>
    <recommendedName>
        <fullName>Chymase</fullName>
        <ecNumber>3.4.21.39</ecNumber>
    </recommendedName>
    <alternativeName>
        <fullName>Alpha-chymase</fullName>
    </alternativeName>
    <alternativeName>
        <fullName>Mast cell chymase 1</fullName>
    </alternativeName>
    <alternativeName>
        <fullName>Mast cell protease 5</fullName>
        <shortName>mMCP-5</shortName>
    </alternativeName>
    <alternativeName>
        <fullName>Mast cell protease I</fullName>
    </alternativeName>
</protein>
<gene>
    <name type="primary">Cma1</name>
    <name type="synonym">Mcpt5</name>
</gene>
<reference key="1">
    <citation type="journal article" date="1991" name="J. Biol. Chem.">
        <title>Molecular cloning of the mouse mast cell protease-5 gene. A novel secretory granule protease expressed early in the differentiation of serosal mast cells.</title>
        <authorList>
            <person name="McNeil H.P."/>
            <person name="Austen K.F."/>
            <person name="Somerville L.L."/>
            <person name="Gurish M.F."/>
            <person name="Stevens R.L."/>
        </authorList>
    </citation>
    <scope>NUCLEOTIDE SEQUENCE [MRNA]</scope>
</reference>
<reference key="2">
    <citation type="journal article" date="1991" name="Eur. J. Immunol.">
        <title>Cloning and structural analysis of MMCP-1, MMCP-4 and MMCP-5, three mouse mast cell-specific serine proteases.</title>
        <authorList>
            <person name="Huang R."/>
            <person name="Blom T."/>
            <person name="Hellman L."/>
        </authorList>
    </citation>
    <scope>NUCLEOTIDE SEQUENCE [MRNA]</scope>
    <source>
        <strain>Leaden X A1</strain>
        <tissue>Mastocytoma</tissue>
    </source>
</reference>
<reference key="3">
    <citation type="journal article" date="1992" name="Biochim. Biophys. Acta">
        <title>Molecular cloning and characterization of mouse mast cell chymases.</title>
        <authorList>
            <person name="Chu W."/>
            <person name="Johnson D.A."/>
            <person name="Musich P.R."/>
        </authorList>
    </citation>
    <scope>NUCLEOTIDE SEQUENCE [MRNA]</scope>
</reference>
<reference key="4">
    <citation type="journal article" date="2001" name="Immunogenetics">
        <title>Characterization of the gene encoding mouse mast cell protease 8 (mMCP-8), and a comparative analysis of hematopoietic serine protease genes.</title>
        <authorList>
            <person name="Lunderius C."/>
            <person name="Hellman L."/>
        </authorList>
    </citation>
    <scope>NUCLEOTIDE SEQUENCE [GENOMIC DNA] OF 1-19</scope>
    <source>
        <strain>129/Sv</strain>
    </source>
</reference>
<reference key="5">
    <citation type="journal article" date="1990" name="Proc. Natl. Acad. Sci. U.S.A.">
        <title>Different mouse mast cell populations express various combinations of at least six distinct mast cell serine proteases.</title>
        <authorList>
            <person name="Reynolds D.S."/>
            <person name="Stevens R.L."/>
            <person name="Lane W.S."/>
            <person name="Carr M.H."/>
            <person name="Austen K.F."/>
            <person name="Serafin W.E."/>
        </authorList>
    </citation>
    <scope>PROTEIN SEQUENCE OF 22-51</scope>
</reference>
<reference key="6">
    <citation type="journal article" date="1992" name="J. Immunol.">
        <title>Translation and granule localization of mouse mast cell protease-5. Immunodetection with specific antipeptide Ig.</title>
        <authorList>
            <person name="McNeil H.P."/>
            <person name="Frenkel D.P."/>
            <person name="Austen F."/>
            <person name="Friend D.S."/>
            <person name="Stevens R.L."/>
        </authorList>
    </citation>
    <scope>SUBCELLULAR LOCATION</scope>
</reference>
<comment type="function">
    <text>Major secreted protease of mast cells with suspected roles in vasoactive peptide generation, extracellular matrix degradation, and regulation of gland secretion.</text>
</comment>
<comment type="catalytic activity">
    <reaction>
        <text>Preferential cleavage: Phe-|-Xaa &gt; Tyr-|-Xaa &gt; Trp-|-Xaa &gt; Leu-|-Xaa.</text>
        <dbReference type="EC" id="3.4.21.39"/>
    </reaction>
</comment>
<comment type="subcellular location">
    <subcellularLocation>
        <location evidence="4">Secreted</location>
    </subcellularLocation>
    <subcellularLocation>
        <location evidence="4">Cytoplasmic granule</location>
    </subcellularLocation>
    <text>Secretory granules.</text>
</comment>
<comment type="tissue specificity">
    <text>Mast cells.</text>
</comment>
<comment type="similarity">
    <text evidence="3">Belongs to the peptidase S1 family. Granzyme subfamily.</text>
</comment>
<comment type="sequence caution" evidence="6">
    <conflict type="erroneous initiation">
        <sequence resource="EMBL-CDS" id="CAA48705"/>
    </conflict>
</comment>
<proteinExistence type="evidence at protein level"/>
<sequence>MHLLTLHLLLLLLGSSTKAGEIIGGTECIPHSRPYMAYLEIVTSENYLSACSGFLIRRNFVLTAAHCAGRSITVLLGAHNKTSKEDTWQKLEVEKQFLHPKYDENLVVHDIMLLKLKEKAKLTLGVGTLPLSANFNFIPPGRMCRAVGWGRTNVNEPASDTLQEVKMRLQEPQACKHFTSFRHNSQLCVGNPKKMQNVYKGDSGGPLLCAGIAQGIASYVHRNAKPPAVFTRISHYRPWINKILREN</sequence>
<accession>P21844</accession>
<accession>Q9R1F0</accession>
<keyword id="KW-0903">Direct protein sequencing</keyword>
<keyword id="KW-1015">Disulfide bond</keyword>
<keyword id="KW-0325">Glycoprotein</keyword>
<keyword id="KW-0378">Hydrolase</keyword>
<keyword id="KW-0645">Protease</keyword>
<keyword id="KW-1185">Reference proteome</keyword>
<keyword id="KW-0964">Secreted</keyword>
<keyword id="KW-0720">Serine protease</keyword>
<keyword id="KW-0732">Signal</keyword>
<keyword id="KW-0865">Zymogen</keyword>